<proteinExistence type="inferred from homology"/>
<reference evidence="6" key="1">
    <citation type="journal article" date="2006" name="Proc. Natl. Acad. Sci. U.S.A.">
        <title>Comparative genomics of the lactic acid bacteria.</title>
        <authorList>
            <person name="Makarova K.S."/>
            <person name="Slesarev A."/>
            <person name="Wolf Y.I."/>
            <person name="Sorokin A."/>
            <person name="Mirkin B."/>
            <person name="Koonin E.V."/>
            <person name="Pavlov A."/>
            <person name="Pavlova N."/>
            <person name="Karamychev V."/>
            <person name="Polouchine N."/>
            <person name="Shakhova V."/>
            <person name="Grigoriev I."/>
            <person name="Lou Y."/>
            <person name="Rohksar D."/>
            <person name="Lucas S."/>
            <person name="Huang K."/>
            <person name="Goodstein D.M."/>
            <person name="Hawkins T."/>
            <person name="Plengvidhya V."/>
            <person name="Welker D."/>
            <person name="Hughes J."/>
            <person name="Goh Y."/>
            <person name="Benson A."/>
            <person name="Baldwin K."/>
            <person name="Lee J.-H."/>
            <person name="Diaz-Muniz I."/>
            <person name="Dosti B."/>
            <person name="Smeianov V."/>
            <person name="Wechter W."/>
            <person name="Barabote R."/>
            <person name="Lorca G."/>
            <person name="Altermann E."/>
            <person name="Barrangou R."/>
            <person name="Ganesan B."/>
            <person name="Xie Y."/>
            <person name="Rawsthorne H."/>
            <person name="Tamir D."/>
            <person name="Parker C."/>
            <person name="Breidt F."/>
            <person name="Broadbent J.R."/>
            <person name="Hutkins R."/>
            <person name="O'Sullivan D."/>
            <person name="Steele J."/>
            <person name="Unlu G."/>
            <person name="Saier M.H. Jr."/>
            <person name="Klaenhammer T."/>
            <person name="Richardson P."/>
            <person name="Kozyavkin S."/>
            <person name="Weimer B.C."/>
            <person name="Mills D.A."/>
        </authorList>
    </citation>
    <scope>NUCLEOTIDE SEQUENCE [LARGE SCALE GENOMIC DNA]</scope>
    <source>
        <strain>ATCC 367 / BCRC 12310 / CIP 105137 / JCM 1170 / LMG 11437 / NCIMB 947 / NCTC 947</strain>
    </source>
</reference>
<accession>Q03NE0</accession>
<comment type="function">
    <text evidence="3">Releases the N-terminal proline from various substrates.</text>
</comment>
<comment type="catalytic activity">
    <reaction evidence="3">
        <text>Release of N-terminal proline from a peptide.</text>
        <dbReference type="EC" id="3.4.11.5"/>
    </reaction>
</comment>
<comment type="subcellular location">
    <subcellularLocation>
        <location evidence="1">Cell envelope</location>
    </subcellularLocation>
</comment>
<comment type="similarity">
    <text evidence="5">Belongs to the peptidase S33 family.</text>
</comment>
<keyword id="KW-0031">Aminopeptidase</keyword>
<keyword id="KW-0378">Hydrolase</keyword>
<keyword id="KW-0645">Protease</keyword>
<keyword id="KW-1185">Reference proteome</keyword>
<gene>
    <name evidence="3" type="primary">pip</name>
    <name evidence="3" type="synonym">pepI</name>
    <name type="ordered locus">LVIS_2232</name>
</gene>
<feature type="chain" id="PRO_0000406322" description="Proline iminopeptidase">
    <location>
        <begin position="1"/>
        <end position="299"/>
    </location>
</feature>
<feature type="domain" description="AB hydrolase-1" evidence="5">
    <location>
        <begin position="29"/>
        <end position="279"/>
    </location>
</feature>
<feature type="active site" description="Nucleophile" evidence="4">
    <location>
        <position position="105"/>
    </location>
</feature>
<feature type="active site" evidence="2">
    <location>
        <position position="245"/>
    </location>
</feature>
<feature type="active site" description="Proton donor" evidence="4">
    <location>
        <position position="272"/>
    </location>
</feature>
<name>PIP_LEVBA</name>
<evidence type="ECO:0000250" key="1"/>
<evidence type="ECO:0000250" key="2">
    <source>
        <dbReference type="UniProtKB" id="O32449"/>
    </source>
</evidence>
<evidence type="ECO:0000250" key="3">
    <source>
        <dbReference type="UniProtKB" id="P52278"/>
    </source>
</evidence>
<evidence type="ECO:0000250" key="4">
    <source>
        <dbReference type="UniProtKB" id="P96084"/>
    </source>
</evidence>
<evidence type="ECO:0000255" key="5"/>
<evidence type="ECO:0000312" key="6">
    <source>
        <dbReference type="EMBL" id="ABJ65282.1"/>
    </source>
</evidence>
<dbReference type="EC" id="3.4.11.5"/>
<dbReference type="EMBL" id="CP000416">
    <property type="protein sequence ID" value="ABJ65282.1"/>
    <property type="molecule type" value="Genomic_DNA"/>
</dbReference>
<dbReference type="RefSeq" id="WP_011668803.1">
    <property type="nucleotide sequence ID" value="NC_008497.1"/>
</dbReference>
<dbReference type="SMR" id="Q03NE0"/>
<dbReference type="STRING" id="387344.LVIS_2232"/>
<dbReference type="ESTHER" id="lacba-pip">
    <property type="family name" value="Proline_iminopeptidase"/>
</dbReference>
<dbReference type="KEGG" id="lbr:LVIS_2232"/>
<dbReference type="PATRIC" id="fig|387344.15.peg.2137"/>
<dbReference type="eggNOG" id="COG2267">
    <property type="taxonomic scope" value="Bacteria"/>
</dbReference>
<dbReference type="HOGENOM" id="CLU_020336_15_0_9"/>
<dbReference type="BRENDA" id="3.4.11.5">
    <property type="organism ID" value="2851"/>
</dbReference>
<dbReference type="Proteomes" id="UP000001652">
    <property type="component" value="Chromosome"/>
</dbReference>
<dbReference type="GO" id="GO:0030313">
    <property type="term" value="C:cell envelope"/>
    <property type="evidence" value="ECO:0007669"/>
    <property type="project" value="UniProtKB-SubCell"/>
</dbReference>
<dbReference type="GO" id="GO:0016020">
    <property type="term" value="C:membrane"/>
    <property type="evidence" value="ECO:0007669"/>
    <property type="project" value="TreeGrafter"/>
</dbReference>
<dbReference type="GO" id="GO:0004177">
    <property type="term" value="F:aminopeptidase activity"/>
    <property type="evidence" value="ECO:0007669"/>
    <property type="project" value="UniProtKB-KW"/>
</dbReference>
<dbReference type="GO" id="GO:0006508">
    <property type="term" value="P:proteolysis"/>
    <property type="evidence" value="ECO:0007669"/>
    <property type="project" value="UniProtKB-KW"/>
</dbReference>
<dbReference type="Gene3D" id="3.40.50.1820">
    <property type="entry name" value="alpha/beta hydrolase"/>
    <property type="match status" value="1"/>
</dbReference>
<dbReference type="InterPro" id="IPR000073">
    <property type="entry name" value="AB_hydrolase_1"/>
</dbReference>
<dbReference type="InterPro" id="IPR029058">
    <property type="entry name" value="AB_hydrolase_fold"/>
</dbReference>
<dbReference type="InterPro" id="IPR050266">
    <property type="entry name" value="AB_hydrolase_sf"/>
</dbReference>
<dbReference type="InterPro" id="IPR002410">
    <property type="entry name" value="Peptidase_S33"/>
</dbReference>
<dbReference type="InterPro" id="IPR005945">
    <property type="entry name" value="Pro_imino_pep"/>
</dbReference>
<dbReference type="NCBIfam" id="TIGR01250">
    <property type="entry name" value="pro_imino_pep_2"/>
    <property type="match status" value="1"/>
</dbReference>
<dbReference type="NCBIfam" id="NF045945">
    <property type="entry name" value="ProImpepLactob"/>
    <property type="match status" value="1"/>
</dbReference>
<dbReference type="PANTHER" id="PTHR43798:SF33">
    <property type="entry name" value="HYDROLASE, PUTATIVE (AFU_ORTHOLOGUE AFUA_2G14860)-RELATED"/>
    <property type="match status" value="1"/>
</dbReference>
<dbReference type="PANTHER" id="PTHR43798">
    <property type="entry name" value="MONOACYLGLYCEROL LIPASE"/>
    <property type="match status" value="1"/>
</dbReference>
<dbReference type="Pfam" id="PF00561">
    <property type="entry name" value="Abhydrolase_1"/>
    <property type="match status" value="1"/>
</dbReference>
<dbReference type="PIRSF" id="PIRSF005539">
    <property type="entry name" value="Pept_S33_TRI_F1"/>
    <property type="match status" value="1"/>
</dbReference>
<dbReference type="PRINTS" id="PR00793">
    <property type="entry name" value="PROAMNOPTASE"/>
</dbReference>
<dbReference type="SUPFAM" id="SSF53474">
    <property type="entry name" value="alpha/beta-Hydrolases"/>
    <property type="match status" value="1"/>
</dbReference>
<protein>
    <recommendedName>
        <fullName evidence="3">Proline iminopeptidase</fullName>
        <shortName evidence="3">PIP</shortName>
        <ecNumber>3.4.11.5</ecNumber>
    </recommendedName>
    <alternativeName>
        <fullName evidence="3">Prolyl aminopeptidase</fullName>
        <shortName evidence="3">PAP</shortName>
    </alternativeName>
</protein>
<organism>
    <name type="scientific">Levilactobacillus brevis (strain ATCC 367 / BCRC 12310 / CIP 105137 / JCM 1170 / LMG 11437 / NCIMB 947 / NCTC 947)</name>
    <name type="common">Lactobacillus brevis</name>
    <dbReference type="NCBI Taxonomy" id="387344"/>
    <lineage>
        <taxon>Bacteria</taxon>
        <taxon>Bacillati</taxon>
        <taxon>Bacillota</taxon>
        <taxon>Bacilli</taxon>
        <taxon>Lactobacillales</taxon>
        <taxon>Lactobacillaceae</taxon>
        <taxon>Levilactobacillus</taxon>
    </lineage>
</organism>
<sequence length="299" mass="33711">MDIQEEYMPFRAYQTYYRVVGDLRSPLTPLLLLHGGPGSTHNYFEAFDQLAMATGRPIVMYDQLGCGRSSIPTDPHLWQAATWVAELRALRAYLKLDCVHLLGQSWGGMLALIYLCDDQPRGIQSVILASTLSSAHLWAREQHRLIQFMSTTDQAAIHQAEMTGDFTTPAYLAANERFMIQHATGPITEQTPEFLRRSKRLGTAAYTTAWGPNEYFPTGTLRDYDYTAKLAQLPYPTLVTSGVNDLCTPLVAKTMVDQLPHAEWTLFPHSRHMAFIDEPAAYQARLTQWLAAHDEVTDD</sequence>